<feature type="chain" id="PRO_0000182616" description="Flagellar filament 35 kDa core protein">
    <location>
        <begin position="1"/>
        <end position="283"/>
    </location>
</feature>
<feature type="sequence conflict" description="In Ref. 1; AAB94024." evidence="1" ref="1">
    <original>I</original>
    <variation>V</variation>
    <location>
        <position position="56"/>
    </location>
</feature>
<feature type="sequence conflict" description="In Ref. 1; AAB94024." evidence="1" ref="1">
    <original>Q</original>
    <variation>R</variation>
    <location>
        <position position="268"/>
    </location>
</feature>
<feature type="sequence conflict" description="In Ref. 1; AAB94024." evidence="1" ref="1">
    <original>Q</original>
    <variation>H</variation>
    <location>
        <position position="282"/>
    </location>
</feature>
<name>FLAB_LEPIN</name>
<evidence type="ECO:0000305" key="1"/>
<proteinExistence type="evidence at protein level"/>
<comment type="function">
    <text evidence="1">Component of the core of the flagella.</text>
</comment>
<comment type="subunit">
    <text>The flagellum consists of two outer layers around a core that contains several antigenically related polypeptides.</text>
</comment>
<comment type="subcellular location">
    <subcellularLocation>
        <location>Periplasmic flagellum</location>
    </subcellularLocation>
    <subcellularLocation>
        <location>Periplasm</location>
    </subcellularLocation>
</comment>
<comment type="similarity">
    <text evidence="1">Belongs to the bacterial flagellin family.</text>
</comment>
<sequence length="283" mass="31272">MIINHNLSAVNAHRSLKFNELAVDKTMKALSSGMRINSAADDASGLAVSEKLRTQINGLRQAERNTEDGMSFIQTAEGFLEQTSNIIQRIRVLAIQTSNGIYSNEDRQLVQVEVSALVDEVDRIASQAEFNKFKLFEGQFARGSRVASMWFHMGPNQNQRERFYIGTMTSKALKLVKADGRPIAISSPGEANDVIGLADAALTKIMKQRADMGAYYNRLEYTAKGLMGAYENMQASESRIRDADMAEEVVSLTTKQILVQSGTAMLAQANMKPNSVLKLLQQI</sequence>
<protein>
    <recommendedName>
        <fullName>Flagellar filament 35 kDa core protein</fullName>
    </recommendedName>
    <alternativeName>
        <fullName>35 kDa antigen</fullName>
    </alternativeName>
    <alternativeName>
        <fullName>Flagellin class B</fullName>
    </alternativeName>
</protein>
<keyword id="KW-0975">Bacterial flagellum</keyword>
<keyword id="KW-0903">Direct protein sequencing</keyword>
<keyword id="KW-0574">Periplasm</keyword>
<keyword id="KW-1185">Reference proteome</keyword>
<reference key="1">
    <citation type="journal article" date="1997" name="Infect. Immun.">
        <title>Identification of a 35-kilodalton serovar-cross-reactive flagellar protein, FlaB, from Leptospira interrogans by N-terminal sequencing, gene cloning, and sequence analysis.</title>
        <authorList>
            <person name="Lin M."/>
            <person name="Surujballi O."/>
            <person name="Nielsen K."/>
            <person name="Nadin-Davis S."/>
            <person name="Randall G."/>
        </authorList>
    </citation>
    <scope>NUCLEOTIDE SEQUENCE [GENOMIC DNA]</scope>
    <scope>PROTEIN SEQUENCE OF 1-13</scope>
    <source>
        <strain>Serogroup Pomona</strain>
    </source>
</reference>
<reference key="2">
    <citation type="journal article" date="2003" name="Nature">
        <title>Unique physiological and pathogenic features of Leptospira interrogans revealed by whole-genome sequencing.</title>
        <authorList>
            <person name="Ren S.-X."/>
            <person name="Fu G."/>
            <person name="Jiang X.-G."/>
            <person name="Zeng R."/>
            <person name="Miao Y.-G."/>
            <person name="Xu H."/>
            <person name="Zhang Y.-X."/>
            <person name="Xiong H."/>
            <person name="Lu G."/>
            <person name="Lu L.-F."/>
            <person name="Jiang H.-Q."/>
            <person name="Jia J."/>
            <person name="Tu Y.-F."/>
            <person name="Jiang J.-X."/>
            <person name="Gu W.-Y."/>
            <person name="Zhang Y.-Q."/>
            <person name="Cai Z."/>
            <person name="Sheng H.-H."/>
            <person name="Yin H.-F."/>
            <person name="Zhang Y."/>
            <person name="Zhu G.-F."/>
            <person name="Wan M."/>
            <person name="Huang H.-L."/>
            <person name="Qian Z."/>
            <person name="Wang S.-Y."/>
            <person name="Ma W."/>
            <person name="Yao Z.-J."/>
            <person name="Shen Y."/>
            <person name="Qiang B.-Q."/>
            <person name="Xia Q.-C."/>
            <person name="Guo X.-K."/>
            <person name="Danchin A."/>
            <person name="Saint Girons I."/>
            <person name="Somerville R.L."/>
            <person name="Wen Y.-M."/>
            <person name="Shi M.-H."/>
            <person name="Chen Z."/>
            <person name="Xu J.-G."/>
            <person name="Zhao G.-P."/>
        </authorList>
    </citation>
    <scope>NUCLEOTIDE SEQUENCE [LARGE SCALE GENOMIC DNA]</scope>
    <source>
        <strain>56601</strain>
    </source>
</reference>
<accession>O51941</accession>
<dbReference type="EMBL" id="AF014114">
    <property type="protein sequence ID" value="AAB94024.1"/>
    <property type="molecule type" value="Genomic_DNA"/>
</dbReference>
<dbReference type="EMBL" id="AE010300">
    <property type="protein sequence ID" value="AAN49218.1"/>
    <property type="molecule type" value="Genomic_DNA"/>
</dbReference>
<dbReference type="RefSeq" id="NP_712200.1">
    <property type="nucleotide sequence ID" value="NC_004342.2"/>
</dbReference>
<dbReference type="RefSeq" id="WP_000586168.1">
    <property type="nucleotide sequence ID" value="NC_004342.2"/>
</dbReference>
<dbReference type="SMR" id="O51941"/>
<dbReference type="FunCoup" id="O51941">
    <property type="interactions" value="110"/>
</dbReference>
<dbReference type="STRING" id="189518.LA_2019"/>
<dbReference type="PaxDb" id="189518-LA_2019"/>
<dbReference type="EnsemblBacteria" id="AAN49218">
    <property type="protein sequence ID" value="AAN49218"/>
    <property type="gene ID" value="LA_2019"/>
</dbReference>
<dbReference type="KEGG" id="lil:LA_2019"/>
<dbReference type="PATRIC" id="fig|189518.3.peg.2015"/>
<dbReference type="HOGENOM" id="CLU_011142_2_0_12"/>
<dbReference type="InParanoid" id="O51941"/>
<dbReference type="OrthoDB" id="9796789at2"/>
<dbReference type="Proteomes" id="UP000001408">
    <property type="component" value="Chromosome I"/>
</dbReference>
<dbReference type="GO" id="GO:0055040">
    <property type="term" value="C:periplasmic flagellum"/>
    <property type="evidence" value="ECO:0007669"/>
    <property type="project" value="UniProtKB-SubCell"/>
</dbReference>
<dbReference type="GO" id="GO:0005198">
    <property type="term" value="F:structural molecule activity"/>
    <property type="evidence" value="ECO:0007669"/>
    <property type="project" value="InterPro"/>
</dbReference>
<dbReference type="Gene3D" id="1.20.1330.10">
    <property type="entry name" value="f41 fragment of flagellin, N-terminal domain"/>
    <property type="match status" value="2"/>
</dbReference>
<dbReference type="Gene3D" id="6.10.10.10">
    <property type="entry name" value="Flagellar export chaperone, C-terminal domain"/>
    <property type="match status" value="1"/>
</dbReference>
<dbReference type="InterPro" id="IPR001492">
    <property type="entry name" value="Flagellin"/>
</dbReference>
<dbReference type="InterPro" id="IPR046358">
    <property type="entry name" value="Flagellin_C"/>
</dbReference>
<dbReference type="InterPro" id="IPR042187">
    <property type="entry name" value="Flagellin_C_sub2"/>
</dbReference>
<dbReference type="InterPro" id="IPR001029">
    <property type="entry name" value="Flagellin_N"/>
</dbReference>
<dbReference type="PANTHER" id="PTHR42792">
    <property type="entry name" value="FLAGELLIN"/>
    <property type="match status" value="1"/>
</dbReference>
<dbReference type="PANTHER" id="PTHR42792:SF2">
    <property type="entry name" value="FLAGELLIN"/>
    <property type="match status" value="1"/>
</dbReference>
<dbReference type="Pfam" id="PF00700">
    <property type="entry name" value="Flagellin_C"/>
    <property type="match status" value="1"/>
</dbReference>
<dbReference type="Pfam" id="PF00669">
    <property type="entry name" value="Flagellin_N"/>
    <property type="match status" value="1"/>
</dbReference>
<dbReference type="PRINTS" id="PR00207">
    <property type="entry name" value="FLAGELLIN"/>
</dbReference>
<dbReference type="SUPFAM" id="SSF64518">
    <property type="entry name" value="Phase 1 flagellin"/>
    <property type="match status" value="1"/>
</dbReference>
<gene>
    <name type="primary">flaB</name>
    <name type="synonym">flaB2</name>
    <name type="ordered locus">LA_2019</name>
</gene>
<organism>
    <name type="scientific">Leptospira interrogans serogroup Icterohaemorrhagiae serovar Lai (strain 56601)</name>
    <dbReference type="NCBI Taxonomy" id="189518"/>
    <lineage>
        <taxon>Bacteria</taxon>
        <taxon>Pseudomonadati</taxon>
        <taxon>Spirochaetota</taxon>
        <taxon>Spirochaetia</taxon>
        <taxon>Leptospirales</taxon>
        <taxon>Leptospiraceae</taxon>
        <taxon>Leptospira</taxon>
    </lineage>
</organism>